<organism>
    <name type="scientific">Homo sapiens</name>
    <name type="common">Human</name>
    <dbReference type="NCBI Taxonomy" id="9606"/>
    <lineage>
        <taxon>Eukaryota</taxon>
        <taxon>Metazoa</taxon>
        <taxon>Chordata</taxon>
        <taxon>Craniata</taxon>
        <taxon>Vertebrata</taxon>
        <taxon>Euteleostomi</taxon>
        <taxon>Mammalia</taxon>
        <taxon>Eutheria</taxon>
        <taxon>Euarchontoglires</taxon>
        <taxon>Primates</taxon>
        <taxon>Haplorrhini</taxon>
        <taxon>Catarrhini</taxon>
        <taxon>Hominidae</taxon>
        <taxon>Homo</taxon>
    </lineage>
</organism>
<keyword id="KW-0002">3D-structure</keyword>
<keyword id="KW-0025">Alternative splicing</keyword>
<keyword id="KW-0963">Cytoplasm</keyword>
<keyword id="KW-0206">Cytoskeleton</keyword>
<keyword id="KW-0524">Neurogenesis</keyword>
<keyword id="KW-0914">Notch signaling pathway</keyword>
<keyword id="KW-0539">Nucleus</keyword>
<keyword id="KW-1267">Proteomics identification</keyword>
<keyword id="KW-1185">Reference proteome</keyword>
<accession>Q96K30</accession>
<accession>B3KVZ4</accession>
<accession>C9JIN1</accession>
<accession>F8VRG5</accession>
<accession>Q53GM3</accession>
<accession>Q96K25</accession>
<proteinExistence type="evidence at protein level"/>
<reference key="1">
    <citation type="journal article" date="2004" name="Nat. Genet.">
        <title>Complete sequencing and characterization of 21,243 full-length human cDNAs.</title>
        <authorList>
            <person name="Ota T."/>
            <person name="Suzuki Y."/>
            <person name="Nishikawa T."/>
            <person name="Otsuki T."/>
            <person name="Sugiyama T."/>
            <person name="Irie R."/>
            <person name="Wakamatsu A."/>
            <person name="Hayashi K."/>
            <person name="Sato H."/>
            <person name="Nagai K."/>
            <person name="Kimura K."/>
            <person name="Makita H."/>
            <person name="Sekine M."/>
            <person name="Obayashi M."/>
            <person name="Nishi T."/>
            <person name="Shibahara T."/>
            <person name="Tanaka T."/>
            <person name="Ishii S."/>
            <person name="Yamamoto J."/>
            <person name="Saito K."/>
            <person name="Kawai Y."/>
            <person name="Isono Y."/>
            <person name="Nakamura Y."/>
            <person name="Nagahari K."/>
            <person name="Murakami K."/>
            <person name="Yasuda T."/>
            <person name="Iwayanagi T."/>
            <person name="Wagatsuma M."/>
            <person name="Shiratori A."/>
            <person name="Sudo H."/>
            <person name="Hosoiri T."/>
            <person name="Kaku Y."/>
            <person name="Kodaira H."/>
            <person name="Kondo H."/>
            <person name="Sugawara M."/>
            <person name="Takahashi M."/>
            <person name="Kanda K."/>
            <person name="Yokoi T."/>
            <person name="Furuya T."/>
            <person name="Kikkawa E."/>
            <person name="Omura Y."/>
            <person name="Abe K."/>
            <person name="Kamihara K."/>
            <person name="Katsuta N."/>
            <person name="Sato K."/>
            <person name="Tanikawa M."/>
            <person name="Yamazaki M."/>
            <person name="Ninomiya K."/>
            <person name="Ishibashi T."/>
            <person name="Yamashita H."/>
            <person name="Murakawa K."/>
            <person name="Fujimori K."/>
            <person name="Tanai H."/>
            <person name="Kimata M."/>
            <person name="Watanabe M."/>
            <person name="Hiraoka S."/>
            <person name="Chiba Y."/>
            <person name="Ishida S."/>
            <person name="Ono Y."/>
            <person name="Takiguchi S."/>
            <person name="Watanabe S."/>
            <person name="Yosida M."/>
            <person name="Hotuta T."/>
            <person name="Kusano J."/>
            <person name="Kanehori K."/>
            <person name="Takahashi-Fujii A."/>
            <person name="Hara H."/>
            <person name="Tanase T.-O."/>
            <person name="Nomura Y."/>
            <person name="Togiya S."/>
            <person name="Komai F."/>
            <person name="Hara R."/>
            <person name="Takeuchi K."/>
            <person name="Arita M."/>
            <person name="Imose N."/>
            <person name="Musashino K."/>
            <person name="Yuuki H."/>
            <person name="Oshima A."/>
            <person name="Sasaki N."/>
            <person name="Aotsuka S."/>
            <person name="Yoshikawa Y."/>
            <person name="Matsunawa H."/>
            <person name="Ichihara T."/>
            <person name="Shiohata N."/>
            <person name="Sano S."/>
            <person name="Moriya S."/>
            <person name="Momiyama H."/>
            <person name="Satoh N."/>
            <person name="Takami S."/>
            <person name="Terashima Y."/>
            <person name="Suzuki O."/>
            <person name="Nakagawa S."/>
            <person name="Senoh A."/>
            <person name="Mizoguchi H."/>
            <person name="Goto Y."/>
            <person name="Shimizu F."/>
            <person name="Wakebe H."/>
            <person name="Hishigaki H."/>
            <person name="Watanabe T."/>
            <person name="Sugiyama A."/>
            <person name="Takemoto M."/>
            <person name="Kawakami B."/>
            <person name="Yamazaki M."/>
            <person name="Watanabe K."/>
            <person name="Kumagai A."/>
            <person name="Itakura S."/>
            <person name="Fukuzumi Y."/>
            <person name="Fujimori Y."/>
            <person name="Komiyama M."/>
            <person name="Tashiro H."/>
            <person name="Tanigami A."/>
            <person name="Fujiwara T."/>
            <person name="Ono T."/>
            <person name="Yamada K."/>
            <person name="Fujii Y."/>
            <person name="Ozaki K."/>
            <person name="Hirao M."/>
            <person name="Ohmori Y."/>
            <person name="Kawabata A."/>
            <person name="Hikiji T."/>
            <person name="Kobatake N."/>
            <person name="Inagaki H."/>
            <person name="Ikema Y."/>
            <person name="Okamoto S."/>
            <person name="Okitani R."/>
            <person name="Kawakami T."/>
            <person name="Noguchi S."/>
            <person name="Itoh T."/>
            <person name="Shigeta K."/>
            <person name="Senba T."/>
            <person name="Matsumura K."/>
            <person name="Nakajima Y."/>
            <person name="Mizuno T."/>
            <person name="Morinaga M."/>
            <person name="Sasaki M."/>
            <person name="Togashi T."/>
            <person name="Oyama M."/>
            <person name="Hata H."/>
            <person name="Watanabe M."/>
            <person name="Komatsu T."/>
            <person name="Mizushima-Sugano J."/>
            <person name="Satoh T."/>
            <person name="Shirai Y."/>
            <person name="Takahashi Y."/>
            <person name="Nakagawa K."/>
            <person name="Okumura K."/>
            <person name="Nagase T."/>
            <person name="Nomura N."/>
            <person name="Kikuchi H."/>
            <person name="Masuho Y."/>
            <person name="Yamashita R."/>
            <person name="Nakai K."/>
            <person name="Yada T."/>
            <person name="Nakamura Y."/>
            <person name="Ohara O."/>
            <person name="Isogai T."/>
            <person name="Sugano S."/>
        </authorList>
    </citation>
    <scope>NUCLEOTIDE SEQUENCE [LARGE SCALE MRNA] (ISOFORMS 1 AND 2)</scope>
    <source>
        <tissue>Neuroblastoma</tissue>
        <tissue>Ovary</tissue>
        <tissue>Teratocarcinoma</tissue>
    </source>
</reference>
<reference key="2">
    <citation type="submission" date="2005-04" db="EMBL/GenBank/DDBJ databases">
        <authorList>
            <person name="Suzuki Y."/>
            <person name="Sugano S."/>
            <person name="Totoki Y."/>
            <person name="Toyoda A."/>
            <person name="Takeda T."/>
            <person name="Sakaki Y."/>
            <person name="Tanaka A."/>
            <person name="Yokoyama S."/>
        </authorList>
    </citation>
    <scope>NUCLEOTIDE SEQUENCE [LARGE SCALE MRNA] (ISOFORM 1)</scope>
    <source>
        <tissue>Kidney</tissue>
    </source>
</reference>
<reference key="3">
    <citation type="journal article" date="2006" name="Nature">
        <title>The finished DNA sequence of human chromosome 12.</title>
        <authorList>
            <person name="Scherer S.E."/>
            <person name="Muzny D.M."/>
            <person name="Buhay C.J."/>
            <person name="Chen R."/>
            <person name="Cree A."/>
            <person name="Ding Y."/>
            <person name="Dugan-Rocha S."/>
            <person name="Gill R."/>
            <person name="Gunaratne P."/>
            <person name="Harris R.A."/>
            <person name="Hawes A.C."/>
            <person name="Hernandez J."/>
            <person name="Hodgson A.V."/>
            <person name="Hume J."/>
            <person name="Jackson A."/>
            <person name="Khan Z.M."/>
            <person name="Kovar-Smith C."/>
            <person name="Lewis L.R."/>
            <person name="Lozado R.J."/>
            <person name="Metzker M.L."/>
            <person name="Milosavljevic A."/>
            <person name="Miner G.R."/>
            <person name="Montgomery K.T."/>
            <person name="Morgan M.B."/>
            <person name="Nazareth L.V."/>
            <person name="Scott G."/>
            <person name="Sodergren E."/>
            <person name="Song X.-Z."/>
            <person name="Steffen D."/>
            <person name="Lovering R.C."/>
            <person name="Wheeler D.A."/>
            <person name="Worley K.C."/>
            <person name="Yuan Y."/>
            <person name="Zhang Z."/>
            <person name="Adams C.Q."/>
            <person name="Ansari-Lari M.A."/>
            <person name="Ayele M."/>
            <person name="Brown M.J."/>
            <person name="Chen G."/>
            <person name="Chen Z."/>
            <person name="Clerc-Blankenburg K.P."/>
            <person name="Davis C."/>
            <person name="Delgado O."/>
            <person name="Dinh H.H."/>
            <person name="Draper H."/>
            <person name="Gonzalez-Garay M.L."/>
            <person name="Havlak P."/>
            <person name="Jackson L.R."/>
            <person name="Jacob L.S."/>
            <person name="Kelly S.H."/>
            <person name="Li L."/>
            <person name="Li Z."/>
            <person name="Liu J."/>
            <person name="Liu W."/>
            <person name="Lu J."/>
            <person name="Maheshwari M."/>
            <person name="Nguyen B.-V."/>
            <person name="Okwuonu G.O."/>
            <person name="Pasternak S."/>
            <person name="Perez L.M."/>
            <person name="Plopper F.J.H."/>
            <person name="Santibanez J."/>
            <person name="Shen H."/>
            <person name="Tabor P.E."/>
            <person name="Verduzco D."/>
            <person name="Waldron L."/>
            <person name="Wang Q."/>
            <person name="Williams G.A."/>
            <person name="Zhang J."/>
            <person name="Zhou J."/>
            <person name="Allen C.C."/>
            <person name="Amin A.G."/>
            <person name="Anyalebechi V."/>
            <person name="Bailey M."/>
            <person name="Barbaria J.A."/>
            <person name="Bimage K.E."/>
            <person name="Bryant N.P."/>
            <person name="Burch P.E."/>
            <person name="Burkett C.E."/>
            <person name="Burrell K.L."/>
            <person name="Calderon E."/>
            <person name="Cardenas V."/>
            <person name="Carter K."/>
            <person name="Casias K."/>
            <person name="Cavazos I."/>
            <person name="Cavazos S.R."/>
            <person name="Ceasar H."/>
            <person name="Chacko J."/>
            <person name="Chan S.N."/>
            <person name="Chavez D."/>
            <person name="Christopoulos C."/>
            <person name="Chu J."/>
            <person name="Cockrell R."/>
            <person name="Cox C.D."/>
            <person name="Dang M."/>
            <person name="Dathorne S.R."/>
            <person name="David R."/>
            <person name="Davis C.M."/>
            <person name="Davy-Carroll L."/>
            <person name="Deshazo D.R."/>
            <person name="Donlin J.E."/>
            <person name="D'Souza L."/>
            <person name="Eaves K.A."/>
            <person name="Egan A."/>
            <person name="Emery-Cohen A.J."/>
            <person name="Escotto M."/>
            <person name="Flagg N."/>
            <person name="Forbes L.D."/>
            <person name="Gabisi A.M."/>
            <person name="Garza M."/>
            <person name="Hamilton C."/>
            <person name="Henderson N."/>
            <person name="Hernandez O."/>
            <person name="Hines S."/>
            <person name="Hogues M.E."/>
            <person name="Huang M."/>
            <person name="Idlebird D.G."/>
            <person name="Johnson R."/>
            <person name="Jolivet A."/>
            <person name="Jones S."/>
            <person name="Kagan R."/>
            <person name="King L.M."/>
            <person name="Leal B."/>
            <person name="Lebow H."/>
            <person name="Lee S."/>
            <person name="LeVan J.M."/>
            <person name="Lewis L.C."/>
            <person name="London P."/>
            <person name="Lorensuhewa L.M."/>
            <person name="Loulseged H."/>
            <person name="Lovett D.A."/>
            <person name="Lucier A."/>
            <person name="Lucier R.L."/>
            <person name="Ma J."/>
            <person name="Madu R.C."/>
            <person name="Mapua P."/>
            <person name="Martindale A.D."/>
            <person name="Martinez E."/>
            <person name="Massey E."/>
            <person name="Mawhiney S."/>
            <person name="Meador M.G."/>
            <person name="Mendez S."/>
            <person name="Mercado C."/>
            <person name="Mercado I.C."/>
            <person name="Merritt C.E."/>
            <person name="Miner Z.L."/>
            <person name="Minja E."/>
            <person name="Mitchell T."/>
            <person name="Mohabbat F."/>
            <person name="Mohabbat K."/>
            <person name="Montgomery B."/>
            <person name="Moore N."/>
            <person name="Morris S."/>
            <person name="Munidasa M."/>
            <person name="Ngo R.N."/>
            <person name="Nguyen N.B."/>
            <person name="Nickerson E."/>
            <person name="Nwaokelemeh O.O."/>
            <person name="Nwokenkwo S."/>
            <person name="Obregon M."/>
            <person name="Oguh M."/>
            <person name="Oragunye N."/>
            <person name="Oviedo R.J."/>
            <person name="Parish B.J."/>
            <person name="Parker D.N."/>
            <person name="Parrish J."/>
            <person name="Parks K.L."/>
            <person name="Paul H.A."/>
            <person name="Payton B.A."/>
            <person name="Perez A."/>
            <person name="Perrin W."/>
            <person name="Pickens A."/>
            <person name="Primus E.L."/>
            <person name="Pu L.-L."/>
            <person name="Puazo M."/>
            <person name="Quiles M.M."/>
            <person name="Quiroz J.B."/>
            <person name="Rabata D."/>
            <person name="Reeves K."/>
            <person name="Ruiz S.J."/>
            <person name="Shao H."/>
            <person name="Sisson I."/>
            <person name="Sonaike T."/>
            <person name="Sorelle R.P."/>
            <person name="Sutton A.E."/>
            <person name="Svatek A.F."/>
            <person name="Svetz L.A."/>
            <person name="Tamerisa K.S."/>
            <person name="Taylor T.R."/>
            <person name="Teague B."/>
            <person name="Thomas N."/>
            <person name="Thorn R.D."/>
            <person name="Trejos Z.Y."/>
            <person name="Trevino B.K."/>
            <person name="Ukegbu O.N."/>
            <person name="Urban J.B."/>
            <person name="Vasquez L.I."/>
            <person name="Vera V.A."/>
            <person name="Villasana D.M."/>
            <person name="Wang L."/>
            <person name="Ward-Moore S."/>
            <person name="Warren J.T."/>
            <person name="Wei X."/>
            <person name="White F."/>
            <person name="Williamson A.L."/>
            <person name="Wleczyk R."/>
            <person name="Wooden H.S."/>
            <person name="Wooden S.H."/>
            <person name="Yen J."/>
            <person name="Yoon L."/>
            <person name="Yoon V."/>
            <person name="Zorrilla S.E."/>
            <person name="Nelson D."/>
            <person name="Kucherlapati R."/>
            <person name="Weinstock G."/>
            <person name="Gibbs R.A."/>
        </authorList>
    </citation>
    <scope>NUCLEOTIDE SEQUENCE [LARGE SCALE GENOMIC DNA]</scope>
</reference>
<reference key="4">
    <citation type="journal article" date="2004" name="Genome Res.">
        <title>The status, quality, and expansion of the NIH full-length cDNA project: the Mammalian Gene Collection (MGC).</title>
        <authorList>
            <consortium name="The MGC Project Team"/>
        </authorList>
    </citation>
    <scope>NUCLEOTIDE SEQUENCE [LARGE SCALE MRNA] (ISOFORM 1)</scope>
    <source>
        <tissue>Ovary</tissue>
    </source>
</reference>
<reference key="5">
    <citation type="journal article" date="2011" name="EMBO J.">
        <title>RITA, a novel modulator of Notch signalling, acts via nuclear export of RBP-J.</title>
        <authorList>
            <person name="Wacker S.A."/>
            <person name="Alvarado C."/>
            <person name="von Wichert G."/>
            <person name="Knippschild U."/>
            <person name="Wiedenmann J."/>
            <person name="Clauss K."/>
            <person name="Nienhaus G.U."/>
            <person name="Hameister H."/>
            <person name="Baumann B."/>
            <person name="Borggrefe T."/>
            <person name="Knochel W."/>
            <person name="Oswald F."/>
        </authorList>
    </citation>
    <scope>FUNCTION</scope>
    <scope>SUBCELLULAR LOCATION</scope>
    <scope>INTERACTION WITH RBPJ</scope>
    <scope>TUBULIN-BINDING</scope>
    <scope>MUTAGENESIS OF LEU-7; MET-12; LEU-15 AND 95-ARG--LYS-97</scope>
</reference>
<evidence type="ECO:0000256" key="1">
    <source>
        <dbReference type="SAM" id="MobiDB-lite"/>
    </source>
</evidence>
<evidence type="ECO:0000269" key="2">
    <source>
    </source>
</evidence>
<evidence type="ECO:0000303" key="3">
    <source>
    </source>
</evidence>
<evidence type="ECO:0000305" key="4"/>
<evidence type="ECO:0007829" key="5">
    <source>
        <dbReference type="PDB" id="5EG6"/>
    </source>
</evidence>
<comment type="function">
    <text evidence="2">Tubulin-binding protein that acts as a negative regulator of Notch signaling pathway. Shuttles between the cytoplasm and the nucleus and mediates the nuclear export of RBPJ/RBPSUH, thereby preventing the interaction between RBPJ/RBPSUH and NICD product of Notch proteins (Notch intracellular domain), leading to down-regulate Notch-mediated transcription. May play a role in neurogenesis.</text>
</comment>
<comment type="subunit">
    <text evidence="2">Interacts with RBPJ/RBPSUH.</text>
</comment>
<comment type="interaction">
    <interactant intactId="EBI-2836148">
        <id>Q96K30</id>
    </interactant>
    <interactant intactId="EBI-1266334">
        <id>O95684</id>
        <label>CEP43</label>
    </interactant>
    <organismsDiffer>false</organismsDiffer>
    <experiments>2</experiments>
</comment>
<comment type="interaction">
    <interactant intactId="EBI-2836148">
        <id>Q96K30</id>
    </interactant>
    <interactant intactId="EBI-374238">
        <id>Q9NPI6</id>
        <label>DCP1A</label>
    </interactant>
    <organismsDiffer>false</organismsDiffer>
    <experiments>4</experiments>
</comment>
<comment type="interaction">
    <interactant intactId="EBI-2836148">
        <id>Q96K30</id>
    </interactant>
    <interactant intactId="EBI-618309">
        <id>Q08379</id>
        <label>GOLGA2</label>
    </interactant>
    <organismsDiffer>false</organismsDiffer>
    <experiments>4</experiments>
</comment>
<comment type="interaction">
    <interactant intactId="EBI-2836148">
        <id>Q96K30</id>
    </interactant>
    <interactant intactId="EBI-632552">
        <id>Q06330</id>
        <label>RBPJ</label>
    </interactant>
    <organismsDiffer>false</organismsDiffer>
    <experiments>10</experiments>
</comment>
<comment type="subcellular location">
    <subcellularLocation>
        <location evidence="2">Cytoplasm</location>
    </subcellularLocation>
    <subcellularLocation>
        <location evidence="2">Nucleus</location>
    </subcellularLocation>
    <subcellularLocation>
        <location evidence="2">Cytoplasm</location>
        <location evidence="2">Cytoskeleton</location>
        <location evidence="2">Microtubule organizing center</location>
        <location evidence="2">Centrosome</location>
    </subcellularLocation>
    <text>Shuttles rapidly between the cytoplasm and the nucleus. The function of centrosome localization is still unclear.</text>
</comment>
<comment type="alternative products">
    <event type="alternative splicing"/>
    <isoform>
        <id>Q96K30-1</id>
        <name>1</name>
        <sequence type="displayed"/>
    </isoform>
    <isoform>
        <id>Q96K30-2</id>
        <name>2</name>
        <sequence type="described" ref="VSP_026636 VSP_026637"/>
    </isoform>
    <isoform>
        <id>Q96K30-3</id>
        <name>3</name>
        <sequence type="described" ref="VSP_055649"/>
    </isoform>
</comment>
<comment type="similarity">
    <text evidence="4">Belongs to the RITA family.</text>
</comment>
<feature type="chain" id="PRO_0000294429" description="RBPJ-interacting and tubulin-associated protein 1">
    <location>
        <begin position="1"/>
        <end position="269"/>
    </location>
</feature>
<feature type="region of interest" description="Disordered" evidence="1">
    <location>
        <begin position="66"/>
        <end position="105"/>
    </location>
</feature>
<feature type="region of interest" description="Interaction with RBPJ/RBPSUH" evidence="2">
    <location>
        <begin position="128"/>
        <end position="156"/>
    </location>
</feature>
<feature type="region of interest" description="Disordered" evidence="1">
    <location>
        <begin position="141"/>
        <end position="269"/>
    </location>
</feature>
<feature type="region of interest" description="Interaction with tubulin">
    <location>
        <begin position="156"/>
        <end position="269"/>
    </location>
</feature>
<feature type="short sequence motif" description="Nuclear export signal">
    <location>
        <begin position="5"/>
        <end position="17"/>
    </location>
</feature>
<feature type="short sequence motif" description="Nuclear localization signal">
    <location>
        <begin position="92"/>
        <end position="108"/>
    </location>
</feature>
<feature type="compositionally biased region" description="Polar residues" evidence="1">
    <location>
        <begin position="80"/>
        <end position="92"/>
    </location>
</feature>
<feature type="compositionally biased region" description="Polar residues" evidence="1">
    <location>
        <begin position="200"/>
        <end position="253"/>
    </location>
</feature>
<feature type="splice variant" id="VSP_055649" description="In isoform 3." evidence="4">
    <original>M</original>
    <variation>MLREPRKQGLAGRAHLLSPGTTGSM</variation>
    <location>
        <position position="1"/>
    </location>
</feature>
<feature type="splice variant" id="VSP_026636" description="In isoform 2." evidence="3">
    <original>LRAIHPAGPSKTEPGPA</original>
    <variation>VPPTQMGLRISGLPRQG</variation>
    <location>
        <begin position="161"/>
        <end position="177"/>
    </location>
</feature>
<feature type="splice variant" id="VSP_026637" description="In isoform 2." evidence="3">
    <location>
        <begin position="178"/>
        <end position="269"/>
    </location>
</feature>
<feature type="sequence variant" id="VAR_050865" description="In dbSNP:rs16942601.">
    <original>S</original>
    <variation>W</variation>
    <location>
        <position position="113"/>
    </location>
</feature>
<feature type="sequence variant" id="VAR_033175" description="In dbSNP:rs34831139.">
    <original>T</original>
    <variation>K</variation>
    <location>
        <position position="220"/>
    </location>
</feature>
<feature type="mutagenesis site" description="Results in nuclear accumulation; when associated with A-12 and A-15." evidence="2">
    <original>L</original>
    <variation>A</variation>
    <location>
        <position position="7"/>
    </location>
</feature>
<feature type="mutagenesis site" description="Results in nuclear accumulation; when associated with A-7 and A-15." evidence="2">
    <original>M</original>
    <variation>A</variation>
    <location>
        <position position="12"/>
    </location>
</feature>
<feature type="mutagenesis site" description="Results in nuclear accumulation; when associated with A-7 and A-12." evidence="2">
    <original>L</original>
    <variation>A</variation>
    <location>
        <position position="15"/>
    </location>
</feature>
<feature type="mutagenesis site" description="Abolishes nuclear localization." evidence="2">
    <original>RKK</original>
    <variation>AAA</variation>
    <location>
        <begin position="95"/>
        <end position="97"/>
    </location>
</feature>
<feature type="sequence conflict" description="In Ref. 1; BAG53956." evidence="4" ref="1">
    <original>A</original>
    <variation>S</variation>
    <location>
        <position position="73"/>
    </location>
</feature>
<feature type="sequence conflict" description="In Ref. 2; BAD96628." evidence="4" ref="2">
    <original>A</original>
    <variation>V</variation>
    <location>
        <position position="217"/>
    </location>
</feature>
<feature type="strand" evidence="5">
    <location>
        <begin position="135"/>
        <end position="138"/>
    </location>
</feature>
<protein>
    <recommendedName>
        <fullName>RBPJ-interacting and tubulin-associated protein 1</fullName>
    </recommendedName>
    <alternativeName>
        <fullName>RBPJ-interacting and tubulin-associated protein</fullName>
    </alternativeName>
</protein>
<gene>
    <name type="primary">RITA1</name>
    <name type="synonym">C12orf52</name>
    <name type="synonym">RITA</name>
    <name type="ORF">PSEC0043</name>
</gene>
<dbReference type="EMBL" id="AK075358">
    <property type="protein sequence ID" value="BAC11568.1"/>
    <property type="molecule type" value="mRNA"/>
</dbReference>
<dbReference type="EMBL" id="AK027733">
    <property type="protein sequence ID" value="BAB55328.1"/>
    <property type="molecule type" value="mRNA"/>
</dbReference>
<dbReference type="EMBL" id="AK027741">
    <property type="protein sequence ID" value="BAB55333.1"/>
    <property type="molecule type" value="mRNA"/>
</dbReference>
<dbReference type="EMBL" id="AK123762">
    <property type="protein sequence ID" value="BAG53956.1"/>
    <property type="molecule type" value="mRNA"/>
</dbReference>
<dbReference type="EMBL" id="AK222908">
    <property type="protein sequence ID" value="BAD96628.1"/>
    <property type="molecule type" value="mRNA"/>
</dbReference>
<dbReference type="EMBL" id="AC089999">
    <property type="status" value="NOT_ANNOTATED_CDS"/>
    <property type="molecule type" value="Genomic_DNA"/>
</dbReference>
<dbReference type="EMBL" id="BC022092">
    <property type="protein sequence ID" value="AAH22092.1"/>
    <property type="molecule type" value="mRNA"/>
</dbReference>
<dbReference type="CCDS" id="CCDS66473.1">
    <molecule id="Q96K30-3"/>
</dbReference>
<dbReference type="CCDS" id="CCDS9166.1">
    <molecule id="Q96K30-1"/>
</dbReference>
<dbReference type="RefSeq" id="NP_001273144.1">
    <molecule id="Q96K30-3"/>
    <property type="nucleotide sequence ID" value="NM_001286215.2"/>
</dbReference>
<dbReference type="RefSeq" id="NP_116237.1">
    <molecule id="Q96K30-1"/>
    <property type="nucleotide sequence ID" value="NM_032848.3"/>
</dbReference>
<dbReference type="RefSeq" id="XP_005254029.1">
    <property type="nucleotide sequence ID" value="XM_005253972.2"/>
</dbReference>
<dbReference type="PDB" id="5EG6">
    <property type="method" value="X-ray"/>
    <property type="resolution" value="2.09 A"/>
    <property type="chains" value="R=133-148"/>
</dbReference>
<dbReference type="PDBsum" id="5EG6"/>
<dbReference type="SMR" id="Q96K30"/>
<dbReference type="BioGRID" id="124368">
    <property type="interactions" value="49"/>
</dbReference>
<dbReference type="FunCoup" id="Q96K30">
    <property type="interactions" value="723"/>
</dbReference>
<dbReference type="IntAct" id="Q96K30">
    <property type="interactions" value="19"/>
</dbReference>
<dbReference type="MINT" id="Q96K30"/>
<dbReference type="STRING" id="9606.ENSP00000448680"/>
<dbReference type="GlyGen" id="Q96K30">
    <property type="glycosylation" value="2 sites"/>
</dbReference>
<dbReference type="iPTMnet" id="Q96K30"/>
<dbReference type="PhosphoSitePlus" id="Q96K30"/>
<dbReference type="BioMuta" id="RITA1"/>
<dbReference type="jPOST" id="Q96K30"/>
<dbReference type="MassIVE" id="Q96K30"/>
<dbReference type="PaxDb" id="9606-ENSP00000448680"/>
<dbReference type="PeptideAtlas" id="Q96K30"/>
<dbReference type="ProteomicsDB" id="28435"/>
<dbReference type="Antibodypedia" id="51448">
    <property type="antibodies" value="86 antibodies from 14 providers"/>
</dbReference>
<dbReference type="DNASU" id="84934"/>
<dbReference type="Ensembl" id="ENST00000548278.2">
    <molecule id="Q96K30-1"/>
    <property type="protein sequence ID" value="ENSP00000449841.1"/>
    <property type="gene ID" value="ENSG00000139405.16"/>
</dbReference>
<dbReference type="Ensembl" id="ENST00000549621.5">
    <molecule id="Q96K30-1"/>
    <property type="protein sequence ID" value="ENSP00000448289.1"/>
    <property type="gene ID" value="ENSG00000139405.16"/>
</dbReference>
<dbReference type="Ensembl" id="ENST00000552495.1">
    <molecule id="Q96K30-3"/>
    <property type="protein sequence ID" value="ENSP00000448680.1"/>
    <property type="gene ID" value="ENSG00000139405.16"/>
</dbReference>
<dbReference type="GeneID" id="84934"/>
<dbReference type="KEGG" id="hsa:84934"/>
<dbReference type="MANE-Select" id="ENST00000548278.2">
    <property type="protein sequence ID" value="ENSP00000449841.1"/>
    <property type="RefSeq nucleotide sequence ID" value="NM_032848.3"/>
    <property type="RefSeq protein sequence ID" value="NP_116237.1"/>
</dbReference>
<dbReference type="UCSC" id="uc001tur.2">
    <molecule id="Q96K30-1"/>
    <property type="organism name" value="human"/>
</dbReference>
<dbReference type="AGR" id="HGNC:25925"/>
<dbReference type="CTD" id="84934"/>
<dbReference type="DisGeNET" id="84934"/>
<dbReference type="GeneCards" id="RITA1"/>
<dbReference type="HGNC" id="HGNC:25925">
    <property type="gene designation" value="RITA1"/>
</dbReference>
<dbReference type="HPA" id="ENSG00000139405">
    <property type="expression patterns" value="Low tissue specificity"/>
</dbReference>
<dbReference type="MIM" id="620696">
    <property type="type" value="gene"/>
</dbReference>
<dbReference type="neXtProt" id="NX_Q96K30"/>
<dbReference type="OpenTargets" id="ENSG00000139405"/>
<dbReference type="PharmGKB" id="PA143485381"/>
<dbReference type="VEuPathDB" id="HostDB:ENSG00000139405"/>
<dbReference type="eggNOG" id="ENOG502S61Y">
    <property type="taxonomic scope" value="Eukaryota"/>
</dbReference>
<dbReference type="GeneTree" id="ENSGT00390000013005"/>
<dbReference type="HOGENOM" id="CLU_062251_0_0_1"/>
<dbReference type="InParanoid" id="Q96K30"/>
<dbReference type="OrthoDB" id="10061257at2759"/>
<dbReference type="PAN-GO" id="Q96K30">
    <property type="GO annotations" value="5 GO annotations based on evolutionary models"/>
</dbReference>
<dbReference type="PhylomeDB" id="Q96K30"/>
<dbReference type="TreeFam" id="TF337291"/>
<dbReference type="PathwayCommons" id="Q96K30"/>
<dbReference type="SignaLink" id="Q96K30"/>
<dbReference type="SIGNOR" id="Q96K30"/>
<dbReference type="BioGRID-ORCS" id="84934">
    <property type="hits" value="34 hits in 1151 CRISPR screens"/>
</dbReference>
<dbReference type="CD-CODE" id="8C2F96ED">
    <property type="entry name" value="Centrosome"/>
</dbReference>
<dbReference type="ChiTaRS" id="RITA1">
    <property type="organism name" value="human"/>
</dbReference>
<dbReference type="GenomeRNAi" id="84934"/>
<dbReference type="Pharos" id="Q96K30">
    <property type="development level" value="Tbio"/>
</dbReference>
<dbReference type="PRO" id="PR:Q96K30"/>
<dbReference type="Proteomes" id="UP000005640">
    <property type="component" value="Chromosome 12"/>
</dbReference>
<dbReference type="RNAct" id="Q96K30">
    <property type="molecule type" value="protein"/>
</dbReference>
<dbReference type="Bgee" id="ENSG00000139405">
    <property type="expression patterns" value="Expressed in left adrenal gland cortex and 174 other cell types or tissues"/>
</dbReference>
<dbReference type="ExpressionAtlas" id="Q96K30">
    <property type="expression patterns" value="baseline and differential"/>
</dbReference>
<dbReference type="GO" id="GO:0005813">
    <property type="term" value="C:centrosome"/>
    <property type="evidence" value="ECO:0000314"/>
    <property type="project" value="UniProtKB"/>
</dbReference>
<dbReference type="GO" id="GO:0005737">
    <property type="term" value="C:cytoplasm"/>
    <property type="evidence" value="ECO:0000314"/>
    <property type="project" value="UniProtKB"/>
</dbReference>
<dbReference type="GO" id="GO:0005654">
    <property type="term" value="C:nucleoplasm"/>
    <property type="evidence" value="ECO:0000314"/>
    <property type="project" value="HPA"/>
</dbReference>
<dbReference type="GO" id="GO:0005634">
    <property type="term" value="C:nucleus"/>
    <property type="evidence" value="ECO:0000314"/>
    <property type="project" value="UniProtKB"/>
</dbReference>
<dbReference type="GO" id="GO:0015631">
    <property type="term" value="F:tubulin binding"/>
    <property type="evidence" value="ECO:0000314"/>
    <property type="project" value="UniProtKB"/>
</dbReference>
<dbReference type="GO" id="GO:0045746">
    <property type="term" value="P:negative regulation of Notch signaling pathway"/>
    <property type="evidence" value="ECO:0000314"/>
    <property type="project" value="UniProtKB"/>
</dbReference>
<dbReference type="GO" id="GO:0000122">
    <property type="term" value="P:negative regulation of transcription by RNA polymerase II"/>
    <property type="evidence" value="ECO:0000304"/>
    <property type="project" value="UniProtKB"/>
</dbReference>
<dbReference type="GO" id="GO:0022008">
    <property type="term" value="P:neurogenesis"/>
    <property type="evidence" value="ECO:0000250"/>
    <property type="project" value="UniProtKB"/>
</dbReference>
<dbReference type="GO" id="GO:0007219">
    <property type="term" value="P:Notch signaling pathway"/>
    <property type="evidence" value="ECO:0007669"/>
    <property type="project" value="UniProtKB-KW"/>
</dbReference>
<dbReference type="GO" id="GO:0051168">
    <property type="term" value="P:nuclear export"/>
    <property type="evidence" value="ECO:0000314"/>
    <property type="project" value="UniProtKB"/>
</dbReference>
<dbReference type="InterPro" id="IPR031418">
    <property type="entry name" value="RITA1"/>
</dbReference>
<dbReference type="PANTHER" id="PTHR34917">
    <property type="entry name" value="RBPJ-INTERACTING AND TUBULIN-ASSOCIATED PROTEIN 1"/>
    <property type="match status" value="1"/>
</dbReference>
<dbReference type="PANTHER" id="PTHR34917:SF1">
    <property type="entry name" value="RBPJ-INTERACTING AND TUBULIN-ASSOCIATED PROTEIN 1"/>
    <property type="match status" value="1"/>
</dbReference>
<dbReference type="Pfam" id="PF17066">
    <property type="entry name" value="RITA"/>
    <property type="match status" value="1"/>
</dbReference>
<name>RITA1_HUMAN</name>
<sequence>MKTPVELAVSGMQTLGLQHRCRGGYRVKARTSYVDETLFGSPAGTRPTPPDFDPPWVEKANRTRGVGKEASKALGAKGSCETTPSRGSTPTLTPRKKNKYRPISHTPSYCDESLFGSRSEGASFGAPRMAKGDAAKLRALLWTPPPTPRGSHSPRPREAPLRAIHPAGPSKTEPGPAADSQKLSMGGLHSSRPLKRGLSHSLTHLNVPSTGHPATSAPHTNGPQDLRPSTSGVTFRSPLVTSRARSVSISVPSTPRRGGATQKPKPPWK</sequence>